<comment type="function">
    <text evidence="1">Binds together with bS18 to 16S ribosomal RNA.</text>
</comment>
<comment type="similarity">
    <text evidence="1">Belongs to the bacterial ribosomal protein bS6 family.</text>
</comment>
<accession>A0KG67</accession>
<reference key="1">
    <citation type="journal article" date="2006" name="J. Bacteriol.">
        <title>Genome sequence of Aeromonas hydrophila ATCC 7966T: jack of all trades.</title>
        <authorList>
            <person name="Seshadri R."/>
            <person name="Joseph S.W."/>
            <person name="Chopra A.K."/>
            <person name="Sha J."/>
            <person name="Shaw J."/>
            <person name="Graf J."/>
            <person name="Haft D.H."/>
            <person name="Wu M."/>
            <person name="Ren Q."/>
            <person name="Rosovitz M.J."/>
            <person name="Madupu R."/>
            <person name="Tallon L."/>
            <person name="Kim M."/>
            <person name="Jin S."/>
            <person name="Vuong H."/>
            <person name="Stine O.C."/>
            <person name="Ali A."/>
            <person name="Horneman A.J."/>
            <person name="Heidelberg J.F."/>
        </authorList>
    </citation>
    <scope>NUCLEOTIDE SEQUENCE [LARGE SCALE GENOMIC DNA]</scope>
    <source>
        <strain>ATCC 7966 / DSM 30187 / BCRC 13018 / CCUG 14551 / JCM 1027 / KCTC 2358 / NCIMB 9240 / NCTC 8049</strain>
    </source>
</reference>
<dbReference type="EMBL" id="CP000462">
    <property type="protein sequence ID" value="ABK36218.1"/>
    <property type="molecule type" value="Genomic_DNA"/>
</dbReference>
<dbReference type="RefSeq" id="WP_005308887.1">
    <property type="nucleotide sequence ID" value="NC_008570.1"/>
</dbReference>
<dbReference type="RefSeq" id="YP_855252.1">
    <property type="nucleotide sequence ID" value="NC_008570.1"/>
</dbReference>
<dbReference type="SMR" id="A0KG67"/>
<dbReference type="STRING" id="380703.AHA_0710"/>
<dbReference type="EnsemblBacteria" id="ABK36218">
    <property type="protein sequence ID" value="ABK36218"/>
    <property type="gene ID" value="AHA_0710"/>
</dbReference>
<dbReference type="GeneID" id="69551088"/>
<dbReference type="KEGG" id="aha:AHA_0710"/>
<dbReference type="PATRIC" id="fig|380703.7.peg.712"/>
<dbReference type="eggNOG" id="COG0360">
    <property type="taxonomic scope" value="Bacteria"/>
</dbReference>
<dbReference type="HOGENOM" id="CLU_113441_6_0_6"/>
<dbReference type="OrthoDB" id="9812702at2"/>
<dbReference type="PRO" id="PR:A0KG67"/>
<dbReference type="Proteomes" id="UP000000756">
    <property type="component" value="Chromosome"/>
</dbReference>
<dbReference type="GO" id="GO:0022627">
    <property type="term" value="C:cytosolic small ribosomal subunit"/>
    <property type="evidence" value="ECO:0007669"/>
    <property type="project" value="TreeGrafter"/>
</dbReference>
<dbReference type="GO" id="GO:0070181">
    <property type="term" value="F:small ribosomal subunit rRNA binding"/>
    <property type="evidence" value="ECO:0007669"/>
    <property type="project" value="TreeGrafter"/>
</dbReference>
<dbReference type="GO" id="GO:0003735">
    <property type="term" value="F:structural constituent of ribosome"/>
    <property type="evidence" value="ECO:0007669"/>
    <property type="project" value="InterPro"/>
</dbReference>
<dbReference type="GO" id="GO:0006412">
    <property type="term" value="P:translation"/>
    <property type="evidence" value="ECO:0007669"/>
    <property type="project" value="UniProtKB-UniRule"/>
</dbReference>
<dbReference type="CDD" id="cd00473">
    <property type="entry name" value="bS6"/>
    <property type="match status" value="1"/>
</dbReference>
<dbReference type="FunFam" id="3.30.70.60:FF:000003">
    <property type="entry name" value="30S ribosomal protein S6"/>
    <property type="match status" value="1"/>
</dbReference>
<dbReference type="Gene3D" id="3.30.70.60">
    <property type="match status" value="1"/>
</dbReference>
<dbReference type="HAMAP" id="MF_00360">
    <property type="entry name" value="Ribosomal_bS6"/>
    <property type="match status" value="1"/>
</dbReference>
<dbReference type="InterPro" id="IPR000529">
    <property type="entry name" value="Ribosomal_bS6"/>
</dbReference>
<dbReference type="InterPro" id="IPR035980">
    <property type="entry name" value="Ribosomal_bS6_sf"/>
</dbReference>
<dbReference type="InterPro" id="IPR020814">
    <property type="entry name" value="Ribosomal_S6_plastid/chlpt"/>
</dbReference>
<dbReference type="InterPro" id="IPR014717">
    <property type="entry name" value="Transl_elong_EF1B/ribsomal_bS6"/>
</dbReference>
<dbReference type="NCBIfam" id="TIGR00166">
    <property type="entry name" value="S6"/>
    <property type="match status" value="1"/>
</dbReference>
<dbReference type="PANTHER" id="PTHR21011">
    <property type="entry name" value="MITOCHONDRIAL 28S RIBOSOMAL PROTEIN S6"/>
    <property type="match status" value="1"/>
</dbReference>
<dbReference type="PANTHER" id="PTHR21011:SF1">
    <property type="entry name" value="SMALL RIBOSOMAL SUBUNIT PROTEIN BS6M"/>
    <property type="match status" value="1"/>
</dbReference>
<dbReference type="Pfam" id="PF01250">
    <property type="entry name" value="Ribosomal_S6"/>
    <property type="match status" value="1"/>
</dbReference>
<dbReference type="SUPFAM" id="SSF54995">
    <property type="entry name" value="Ribosomal protein S6"/>
    <property type="match status" value="1"/>
</dbReference>
<protein>
    <recommendedName>
        <fullName evidence="1">Small ribosomal subunit protein bS6</fullName>
    </recommendedName>
    <alternativeName>
        <fullName evidence="3">30S ribosomal protein S6</fullName>
    </alternativeName>
</protein>
<organism>
    <name type="scientific">Aeromonas hydrophila subsp. hydrophila (strain ATCC 7966 / DSM 30187 / BCRC 13018 / CCUG 14551 / JCM 1027 / KCTC 2358 / NCIMB 9240 / NCTC 8049)</name>
    <dbReference type="NCBI Taxonomy" id="380703"/>
    <lineage>
        <taxon>Bacteria</taxon>
        <taxon>Pseudomonadati</taxon>
        <taxon>Pseudomonadota</taxon>
        <taxon>Gammaproteobacteria</taxon>
        <taxon>Aeromonadales</taxon>
        <taxon>Aeromonadaceae</taxon>
        <taxon>Aeromonas</taxon>
    </lineage>
</organism>
<feature type="chain" id="PRO_1000005208" description="Small ribosomal subunit protein bS6">
    <location>
        <begin position="1"/>
        <end position="128"/>
    </location>
</feature>
<feature type="region of interest" description="Disordered" evidence="2">
    <location>
        <begin position="100"/>
        <end position="128"/>
    </location>
</feature>
<feature type="compositionally biased region" description="Basic and acidic residues" evidence="2">
    <location>
        <begin position="104"/>
        <end position="121"/>
    </location>
</feature>
<evidence type="ECO:0000255" key="1">
    <source>
        <dbReference type="HAMAP-Rule" id="MF_00360"/>
    </source>
</evidence>
<evidence type="ECO:0000256" key="2">
    <source>
        <dbReference type="SAM" id="MobiDB-lite"/>
    </source>
</evidence>
<evidence type="ECO:0000305" key="3"/>
<gene>
    <name evidence="1" type="primary">rpsF</name>
    <name type="ordered locus">AHA_0710</name>
</gene>
<name>RS6_AERHH</name>
<proteinExistence type="inferred from homology"/>
<sequence>MRHYEIVFMVHPDQSEQVPGMIERYTGAITTSGGTIHRLEDWGRRQLAYPIDKLHKAHYVLMNVEAEQAVIDELETNFRFNDAVIRNMIMRTKHAVTEVSPMAKAKEERFTRRDDERREEATEAASEE</sequence>
<keyword id="KW-1185">Reference proteome</keyword>
<keyword id="KW-0687">Ribonucleoprotein</keyword>
<keyword id="KW-0689">Ribosomal protein</keyword>
<keyword id="KW-0694">RNA-binding</keyword>
<keyword id="KW-0699">rRNA-binding</keyword>